<gene>
    <name type="ORF">ZK673.6</name>
</gene>
<feature type="chain" id="PRO_0000065540" description="Uncharacterized protein ZK673.6">
    <location>
        <begin position="1"/>
        <end position="284"/>
    </location>
</feature>
<feature type="region of interest" description="Disordered" evidence="1">
    <location>
        <begin position="1"/>
        <end position="29"/>
    </location>
</feature>
<feature type="region of interest" description="Disordered" evidence="1">
    <location>
        <begin position="248"/>
        <end position="284"/>
    </location>
</feature>
<feature type="compositionally biased region" description="Polar residues" evidence="1">
    <location>
        <begin position="1"/>
        <end position="27"/>
    </location>
</feature>
<sequence>MSNLPTSTPVSPSNLAEENPKSNNPESSEIEDANFVGKILNKDQFNLNEQFSSDIEWIIKYLDVMQGVTVGLEKMCISGTSYHFSDKTEVPNSGWRYMPAYLKKVEFIKKNEAEANMIAELCEKMGHKEEQHFYDIKNVDHDSNIYTTTVFYCDKIKKMYSDVEKTVKTCNRRRKKVEKTQILPDLRDQCTKYHKAVHTLDEQCRELDNLKEYVRAGRHFHNRHFKQGLVVISALTAVRSGVIKEWMTRDSKRQQKKGKTTTVARSTNKKNKSMMGTVKDLKKK</sequence>
<evidence type="ECO:0000256" key="1">
    <source>
        <dbReference type="SAM" id="MobiDB-lite"/>
    </source>
</evidence>
<proteinExistence type="predicted"/>
<organism>
    <name type="scientific">Caenorhabditis elegans</name>
    <dbReference type="NCBI Taxonomy" id="6239"/>
    <lineage>
        <taxon>Eukaryota</taxon>
        <taxon>Metazoa</taxon>
        <taxon>Ecdysozoa</taxon>
        <taxon>Nematoda</taxon>
        <taxon>Chromadorea</taxon>
        <taxon>Rhabditida</taxon>
        <taxon>Rhabditina</taxon>
        <taxon>Rhabditomorpha</taxon>
        <taxon>Rhabditoidea</taxon>
        <taxon>Rhabditidae</taxon>
        <taxon>Peloderinae</taxon>
        <taxon>Caenorhabditis</taxon>
    </lineage>
</organism>
<dbReference type="EMBL" id="Z48585">
    <property type="protein sequence ID" value="CAA88481.1"/>
    <property type="molecule type" value="Genomic_DNA"/>
</dbReference>
<dbReference type="PIR" id="T27962">
    <property type="entry name" value="T27962"/>
</dbReference>
<dbReference type="RefSeq" id="NP_496249.1">
    <property type="nucleotide sequence ID" value="NM_063848.6"/>
</dbReference>
<dbReference type="SMR" id="Q09378"/>
<dbReference type="BioGRID" id="39929">
    <property type="interactions" value="12"/>
</dbReference>
<dbReference type="FunCoup" id="Q09378">
    <property type="interactions" value="268"/>
</dbReference>
<dbReference type="STRING" id="6239.ZK673.6.1"/>
<dbReference type="PaxDb" id="6239-ZK673.6"/>
<dbReference type="EnsemblMetazoa" id="ZK673.6.1">
    <property type="protein sequence ID" value="ZK673.6.1"/>
    <property type="gene ID" value="WBGene00014062"/>
</dbReference>
<dbReference type="GeneID" id="174611"/>
<dbReference type="KEGG" id="cel:CELE_ZK673.6"/>
<dbReference type="UCSC" id="ZK673.6">
    <property type="organism name" value="c. elegans"/>
</dbReference>
<dbReference type="AGR" id="WB:WBGene00014062"/>
<dbReference type="CTD" id="174611"/>
<dbReference type="WormBase" id="ZK673.6">
    <property type="protein sequence ID" value="CE01718"/>
    <property type="gene ID" value="WBGene00014062"/>
</dbReference>
<dbReference type="eggNOG" id="ENOG502THYD">
    <property type="taxonomic scope" value="Eukaryota"/>
</dbReference>
<dbReference type="HOGENOM" id="CLU_1035270_0_0_1"/>
<dbReference type="InParanoid" id="Q09378"/>
<dbReference type="OMA" id="PNSGWRY"/>
<dbReference type="OrthoDB" id="5812564at2759"/>
<dbReference type="PRO" id="PR:Q09378"/>
<dbReference type="Proteomes" id="UP000001940">
    <property type="component" value="Chromosome II"/>
</dbReference>
<dbReference type="Bgee" id="WBGene00014062">
    <property type="expression patterns" value="Expressed in material anatomical entity and 2 other cell types or tissues"/>
</dbReference>
<name>YS56_CAEEL</name>
<protein>
    <recommendedName>
        <fullName>Uncharacterized protein ZK673.6</fullName>
    </recommendedName>
</protein>
<keyword id="KW-1185">Reference proteome</keyword>
<accession>Q09378</accession>
<reference key="1">
    <citation type="journal article" date="1998" name="Science">
        <title>Genome sequence of the nematode C. elegans: a platform for investigating biology.</title>
        <authorList>
            <consortium name="The C. elegans sequencing consortium"/>
        </authorList>
    </citation>
    <scope>NUCLEOTIDE SEQUENCE [LARGE SCALE GENOMIC DNA]</scope>
    <source>
        <strain>Bristol N2</strain>
    </source>
</reference>